<reference key="1">
    <citation type="submission" date="2006-03" db="EMBL/GenBank/DDBJ databases">
        <title>Complete sequence of Methylobacillus flagellatus KT.</title>
        <authorList>
            <consortium name="US DOE Joint Genome Institute"/>
            <person name="Copeland A."/>
            <person name="Lucas S."/>
            <person name="Lapidus A."/>
            <person name="Barry K."/>
            <person name="Detter J.C."/>
            <person name="Glavina del Rio T."/>
            <person name="Hammon N."/>
            <person name="Israni S."/>
            <person name="Dalin E."/>
            <person name="Tice H."/>
            <person name="Pitluck S."/>
            <person name="Brettin T."/>
            <person name="Bruce D."/>
            <person name="Han C."/>
            <person name="Tapia R."/>
            <person name="Saunders E."/>
            <person name="Gilna P."/>
            <person name="Schmutz J."/>
            <person name="Larimer F."/>
            <person name="Land M."/>
            <person name="Kyrpides N."/>
            <person name="Anderson I."/>
            <person name="Richardson P."/>
        </authorList>
    </citation>
    <scope>NUCLEOTIDE SEQUENCE [LARGE SCALE GENOMIC DNA]</scope>
    <source>
        <strain>ATCC 51484 / DSM 6875 / VKM B-1610 / KT</strain>
    </source>
</reference>
<feature type="chain" id="PRO_1000076566" description="tRNA-specific 2-thiouridylase MnmA">
    <location>
        <begin position="1"/>
        <end position="360"/>
    </location>
</feature>
<feature type="region of interest" description="Interaction with target base in tRNA" evidence="1">
    <location>
        <begin position="94"/>
        <end position="96"/>
    </location>
</feature>
<feature type="region of interest" description="Interaction with tRNA" evidence="1">
    <location>
        <begin position="145"/>
        <end position="147"/>
    </location>
</feature>
<feature type="region of interest" description="Interaction with tRNA" evidence="1">
    <location>
        <begin position="307"/>
        <end position="308"/>
    </location>
</feature>
<feature type="active site" description="Nucleophile" evidence="1">
    <location>
        <position position="99"/>
    </location>
</feature>
<feature type="active site" description="Cysteine persulfide intermediate" evidence="1">
    <location>
        <position position="195"/>
    </location>
</feature>
<feature type="binding site" evidence="1">
    <location>
        <begin position="8"/>
        <end position="15"/>
    </location>
    <ligand>
        <name>ATP</name>
        <dbReference type="ChEBI" id="CHEBI:30616"/>
    </ligand>
</feature>
<feature type="binding site" evidence="1">
    <location>
        <position position="34"/>
    </location>
    <ligand>
        <name>ATP</name>
        <dbReference type="ChEBI" id="CHEBI:30616"/>
    </ligand>
</feature>
<feature type="binding site" evidence="1">
    <location>
        <position position="123"/>
    </location>
    <ligand>
        <name>ATP</name>
        <dbReference type="ChEBI" id="CHEBI:30616"/>
    </ligand>
</feature>
<feature type="site" description="Interaction with tRNA" evidence="1">
    <location>
        <position position="124"/>
    </location>
</feature>
<feature type="site" description="Interaction with tRNA" evidence="1">
    <location>
        <position position="340"/>
    </location>
</feature>
<feature type="disulfide bond" description="Alternate" evidence="1">
    <location>
        <begin position="99"/>
        <end position="195"/>
    </location>
</feature>
<gene>
    <name evidence="1" type="primary">mnmA</name>
    <name type="synonym">trmU</name>
    <name type="ordered locus">Mfla_2115</name>
</gene>
<evidence type="ECO:0000255" key="1">
    <source>
        <dbReference type="HAMAP-Rule" id="MF_00144"/>
    </source>
</evidence>
<name>MNMA_METFK</name>
<sequence length="360" mass="39999">MKKKVIVGMSGGVDSSVAALLLKEQGYEVVGLFMKNWEDDDTDEYCPAKQDLIDAAAVADKIGIELEAVNFSKEYKERVFANFLEEYSAGRTPNPDILCNSEIKFKAFLDHAMALGGDLMATGHYAQVREKNGLFQLMKADDGTKDQSYFLYRLNQAQLSKTLFPLGHLLKREIRDIARRAGLPTSEKKDSTGICFIGERPFQEFLSRYLPRAPGEIQTPEGKVVGQHHGLMYYTMGQRQGLGIGGSKDSNGEPWFVAGKDMQRNVLIVVQGHDHPLLLNDGLIADNLHWIAGEEPKTHWVYAAKTRYRQPDAPCEIDRLDSGTAEIRFGHKQWAITPGQSVVVYESNVCLGGGIITSAL</sequence>
<protein>
    <recommendedName>
        <fullName evidence="1">tRNA-specific 2-thiouridylase MnmA</fullName>
        <ecNumber evidence="1">2.8.1.13</ecNumber>
    </recommendedName>
</protein>
<dbReference type="EC" id="2.8.1.13" evidence="1"/>
<dbReference type="EMBL" id="CP000284">
    <property type="protein sequence ID" value="ABE50382.1"/>
    <property type="molecule type" value="Genomic_DNA"/>
</dbReference>
<dbReference type="RefSeq" id="WP_011480336.1">
    <property type="nucleotide sequence ID" value="NC_007947.1"/>
</dbReference>
<dbReference type="SMR" id="Q1GZF5"/>
<dbReference type="STRING" id="265072.Mfla_2115"/>
<dbReference type="KEGG" id="mfa:Mfla_2115"/>
<dbReference type="eggNOG" id="COG0482">
    <property type="taxonomic scope" value="Bacteria"/>
</dbReference>
<dbReference type="HOGENOM" id="CLU_035188_1_0_4"/>
<dbReference type="Proteomes" id="UP000002440">
    <property type="component" value="Chromosome"/>
</dbReference>
<dbReference type="GO" id="GO:0005737">
    <property type="term" value="C:cytoplasm"/>
    <property type="evidence" value="ECO:0007669"/>
    <property type="project" value="UniProtKB-SubCell"/>
</dbReference>
<dbReference type="GO" id="GO:0005524">
    <property type="term" value="F:ATP binding"/>
    <property type="evidence" value="ECO:0007669"/>
    <property type="project" value="UniProtKB-KW"/>
</dbReference>
<dbReference type="GO" id="GO:0000049">
    <property type="term" value="F:tRNA binding"/>
    <property type="evidence" value="ECO:0007669"/>
    <property type="project" value="UniProtKB-KW"/>
</dbReference>
<dbReference type="GO" id="GO:0103016">
    <property type="term" value="F:tRNA-uridine 2-sulfurtransferase activity"/>
    <property type="evidence" value="ECO:0007669"/>
    <property type="project" value="UniProtKB-EC"/>
</dbReference>
<dbReference type="GO" id="GO:0002143">
    <property type="term" value="P:tRNA wobble position uridine thiolation"/>
    <property type="evidence" value="ECO:0007669"/>
    <property type="project" value="TreeGrafter"/>
</dbReference>
<dbReference type="CDD" id="cd01998">
    <property type="entry name" value="MnmA_TRMU-like"/>
    <property type="match status" value="1"/>
</dbReference>
<dbReference type="FunFam" id="2.30.30.280:FF:000001">
    <property type="entry name" value="tRNA-specific 2-thiouridylase MnmA"/>
    <property type="match status" value="1"/>
</dbReference>
<dbReference type="FunFam" id="2.40.30.10:FF:000023">
    <property type="entry name" value="tRNA-specific 2-thiouridylase MnmA"/>
    <property type="match status" value="1"/>
</dbReference>
<dbReference type="FunFam" id="3.40.50.620:FF:000004">
    <property type="entry name" value="tRNA-specific 2-thiouridylase MnmA"/>
    <property type="match status" value="1"/>
</dbReference>
<dbReference type="Gene3D" id="2.30.30.280">
    <property type="entry name" value="Adenine nucleotide alpha hydrolases-like domains"/>
    <property type="match status" value="1"/>
</dbReference>
<dbReference type="Gene3D" id="3.40.50.620">
    <property type="entry name" value="HUPs"/>
    <property type="match status" value="1"/>
</dbReference>
<dbReference type="Gene3D" id="2.40.30.10">
    <property type="entry name" value="Translation factors"/>
    <property type="match status" value="1"/>
</dbReference>
<dbReference type="HAMAP" id="MF_00144">
    <property type="entry name" value="tRNA_thiouridyl_MnmA"/>
    <property type="match status" value="1"/>
</dbReference>
<dbReference type="InterPro" id="IPR004506">
    <property type="entry name" value="MnmA-like"/>
</dbReference>
<dbReference type="InterPro" id="IPR046885">
    <property type="entry name" value="MnmA-like_C"/>
</dbReference>
<dbReference type="InterPro" id="IPR046884">
    <property type="entry name" value="MnmA-like_central"/>
</dbReference>
<dbReference type="InterPro" id="IPR023382">
    <property type="entry name" value="MnmA-like_central_sf"/>
</dbReference>
<dbReference type="InterPro" id="IPR014729">
    <property type="entry name" value="Rossmann-like_a/b/a_fold"/>
</dbReference>
<dbReference type="NCBIfam" id="NF001138">
    <property type="entry name" value="PRK00143.1"/>
    <property type="match status" value="1"/>
</dbReference>
<dbReference type="NCBIfam" id="TIGR00420">
    <property type="entry name" value="trmU"/>
    <property type="match status" value="1"/>
</dbReference>
<dbReference type="PANTHER" id="PTHR11933:SF5">
    <property type="entry name" value="MITOCHONDRIAL TRNA-SPECIFIC 2-THIOURIDYLASE 1"/>
    <property type="match status" value="1"/>
</dbReference>
<dbReference type="PANTHER" id="PTHR11933">
    <property type="entry name" value="TRNA 5-METHYLAMINOMETHYL-2-THIOURIDYLATE -METHYLTRANSFERASE"/>
    <property type="match status" value="1"/>
</dbReference>
<dbReference type="Pfam" id="PF03054">
    <property type="entry name" value="tRNA_Me_trans"/>
    <property type="match status" value="1"/>
</dbReference>
<dbReference type="Pfam" id="PF20258">
    <property type="entry name" value="tRNA_Me_trans_C"/>
    <property type="match status" value="1"/>
</dbReference>
<dbReference type="Pfam" id="PF20259">
    <property type="entry name" value="tRNA_Me_trans_M"/>
    <property type="match status" value="1"/>
</dbReference>
<dbReference type="SUPFAM" id="SSF52402">
    <property type="entry name" value="Adenine nucleotide alpha hydrolases-like"/>
    <property type="match status" value="1"/>
</dbReference>
<organism>
    <name type="scientific">Methylobacillus flagellatus (strain ATCC 51484 / DSM 6875 / VKM B-1610 / KT)</name>
    <dbReference type="NCBI Taxonomy" id="265072"/>
    <lineage>
        <taxon>Bacteria</taxon>
        <taxon>Pseudomonadati</taxon>
        <taxon>Pseudomonadota</taxon>
        <taxon>Betaproteobacteria</taxon>
        <taxon>Nitrosomonadales</taxon>
        <taxon>Methylophilaceae</taxon>
        <taxon>Methylobacillus</taxon>
    </lineage>
</organism>
<proteinExistence type="inferred from homology"/>
<accession>Q1GZF5</accession>
<comment type="function">
    <text evidence="1">Catalyzes the 2-thiolation of uridine at the wobble position (U34) of tRNA, leading to the formation of s(2)U34.</text>
</comment>
<comment type="catalytic activity">
    <reaction evidence="1">
        <text>S-sulfanyl-L-cysteinyl-[protein] + uridine(34) in tRNA + AH2 + ATP = 2-thiouridine(34) in tRNA + L-cysteinyl-[protein] + A + AMP + diphosphate + H(+)</text>
        <dbReference type="Rhea" id="RHEA:47032"/>
        <dbReference type="Rhea" id="RHEA-COMP:10131"/>
        <dbReference type="Rhea" id="RHEA-COMP:11726"/>
        <dbReference type="Rhea" id="RHEA-COMP:11727"/>
        <dbReference type="Rhea" id="RHEA-COMP:11728"/>
        <dbReference type="ChEBI" id="CHEBI:13193"/>
        <dbReference type="ChEBI" id="CHEBI:15378"/>
        <dbReference type="ChEBI" id="CHEBI:17499"/>
        <dbReference type="ChEBI" id="CHEBI:29950"/>
        <dbReference type="ChEBI" id="CHEBI:30616"/>
        <dbReference type="ChEBI" id="CHEBI:33019"/>
        <dbReference type="ChEBI" id="CHEBI:61963"/>
        <dbReference type="ChEBI" id="CHEBI:65315"/>
        <dbReference type="ChEBI" id="CHEBI:87170"/>
        <dbReference type="ChEBI" id="CHEBI:456215"/>
        <dbReference type="EC" id="2.8.1.13"/>
    </reaction>
</comment>
<comment type="subcellular location">
    <subcellularLocation>
        <location evidence="1">Cytoplasm</location>
    </subcellularLocation>
</comment>
<comment type="similarity">
    <text evidence="1">Belongs to the MnmA/TRMU family.</text>
</comment>
<keyword id="KW-0067">ATP-binding</keyword>
<keyword id="KW-0963">Cytoplasm</keyword>
<keyword id="KW-1015">Disulfide bond</keyword>
<keyword id="KW-0547">Nucleotide-binding</keyword>
<keyword id="KW-1185">Reference proteome</keyword>
<keyword id="KW-0694">RNA-binding</keyword>
<keyword id="KW-0808">Transferase</keyword>
<keyword id="KW-0819">tRNA processing</keyword>
<keyword id="KW-0820">tRNA-binding</keyword>